<dbReference type="EC" id="2.7.7.56" evidence="1"/>
<dbReference type="EMBL" id="CP000958">
    <property type="protein sequence ID" value="ACA90134.1"/>
    <property type="molecule type" value="Genomic_DNA"/>
</dbReference>
<dbReference type="RefSeq" id="WP_006476623.1">
    <property type="nucleotide sequence ID" value="NC_010508.1"/>
</dbReference>
<dbReference type="SMR" id="B1JXM2"/>
<dbReference type="GeneID" id="83047748"/>
<dbReference type="KEGG" id="bcm:Bcenmc03_0957"/>
<dbReference type="HOGENOM" id="CLU_050858_0_0_4"/>
<dbReference type="Proteomes" id="UP000002169">
    <property type="component" value="Chromosome 1"/>
</dbReference>
<dbReference type="GO" id="GO:0000175">
    <property type="term" value="F:3'-5'-RNA exonuclease activity"/>
    <property type="evidence" value="ECO:0007669"/>
    <property type="project" value="UniProtKB-UniRule"/>
</dbReference>
<dbReference type="GO" id="GO:0000049">
    <property type="term" value="F:tRNA binding"/>
    <property type="evidence" value="ECO:0007669"/>
    <property type="project" value="UniProtKB-UniRule"/>
</dbReference>
<dbReference type="GO" id="GO:0009022">
    <property type="term" value="F:tRNA nucleotidyltransferase activity"/>
    <property type="evidence" value="ECO:0007669"/>
    <property type="project" value="UniProtKB-UniRule"/>
</dbReference>
<dbReference type="GO" id="GO:0016075">
    <property type="term" value="P:rRNA catabolic process"/>
    <property type="evidence" value="ECO:0007669"/>
    <property type="project" value="UniProtKB-UniRule"/>
</dbReference>
<dbReference type="GO" id="GO:0006364">
    <property type="term" value="P:rRNA processing"/>
    <property type="evidence" value="ECO:0007669"/>
    <property type="project" value="UniProtKB-KW"/>
</dbReference>
<dbReference type="GO" id="GO:0008033">
    <property type="term" value="P:tRNA processing"/>
    <property type="evidence" value="ECO:0007669"/>
    <property type="project" value="UniProtKB-UniRule"/>
</dbReference>
<dbReference type="CDD" id="cd11362">
    <property type="entry name" value="RNase_PH_bact"/>
    <property type="match status" value="1"/>
</dbReference>
<dbReference type="FunFam" id="3.30.230.70:FF:000003">
    <property type="entry name" value="Ribonuclease PH"/>
    <property type="match status" value="1"/>
</dbReference>
<dbReference type="Gene3D" id="3.30.230.70">
    <property type="entry name" value="GHMP Kinase, N-terminal domain"/>
    <property type="match status" value="1"/>
</dbReference>
<dbReference type="HAMAP" id="MF_00564">
    <property type="entry name" value="RNase_PH"/>
    <property type="match status" value="1"/>
</dbReference>
<dbReference type="InterPro" id="IPR001247">
    <property type="entry name" value="ExoRNase_PH_dom1"/>
</dbReference>
<dbReference type="InterPro" id="IPR015847">
    <property type="entry name" value="ExoRNase_PH_dom2"/>
</dbReference>
<dbReference type="InterPro" id="IPR036345">
    <property type="entry name" value="ExoRNase_PH_dom2_sf"/>
</dbReference>
<dbReference type="InterPro" id="IPR027408">
    <property type="entry name" value="PNPase/RNase_PH_dom_sf"/>
</dbReference>
<dbReference type="InterPro" id="IPR020568">
    <property type="entry name" value="Ribosomal_Su5_D2-typ_SF"/>
</dbReference>
<dbReference type="InterPro" id="IPR050080">
    <property type="entry name" value="RNase_PH"/>
</dbReference>
<dbReference type="InterPro" id="IPR002381">
    <property type="entry name" value="RNase_PH_bac-type"/>
</dbReference>
<dbReference type="InterPro" id="IPR018336">
    <property type="entry name" value="RNase_PH_CS"/>
</dbReference>
<dbReference type="NCBIfam" id="TIGR01966">
    <property type="entry name" value="RNasePH"/>
    <property type="match status" value="1"/>
</dbReference>
<dbReference type="PANTHER" id="PTHR11953">
    <property type="entry name" value="EXOSOME COMPLEX COMPONENT"/>
    <property type="match status" value="1"/>
</dbReference>
<dbReference type="PANTHER" id="PTHR11953:SF0">
    <property type="entry name" value="EXOSOME COMPLEX COMPONENT RRP41"/>
    <property type="match status" value="1"/>
</dbReference>
<dbReference type="Pfam" id="PF01138">
    <property type="entry name" value="RNase_PH"/>
    <property type="match status" value="1"/>
</dbReference>
<dbReference type="Pfam" id="PF03725">
    <property type="entry name" value="RNase_PH_C"/>
    <property type="match status" value="1"/>
</dbReference>
<dbReference type="SUPFAM" id="SSF55666">
    <property type="entry name" value="Ribonuclease PH domain 2-like"/>
    <property type="match status" value="1"/>
</dbReference>
<dbReference type="SUPFAM" id="SSF54211">
    <property type="entry name" value="Ribosomal protein S5 domain 2-like"/>
    <property type="match status" value="1"/>
</dbReference>
<dbReference type="PROSITE" id="PS01277">
    <property type="entry name" value="RIBONUCLEASE_PH"/>
    <property type="match status" value="1"/>
</dbReference>
<name>RNPH_BURO0</name>
<keyword id="KW-0548">Nucleotidyltransferase</keyword>
<keyword id="KW-0694">RNA-binding</keyword>
<keyword id="KW-0698">rRNA processing</keyword>
<keyword id="KW-0808">Transferase</keyword>
<keyword id="KW-0819">tRNA processing</keyword>
<keyword id="KW-0820">tRNA-binding</keyword>
<protein>
    <recommendedName>
        <fullName evidence="1">Ribonuclease PH</fullName>
        <shortName evidence="1">RNase PH</shortName>
        <ecNumber evidence="1">2.7.7.56</ecNumber>
    </recommendedName>
    <alternativeName>
        <fullName evidence="1">tRNA nucleotidyltransferase</fullName>
    </alternativeName>
</protein>
<reference key="1">
    <citation type="submission" date="2008-02" db="EMBL/GenBank/DDBJ databases">
        <title>Complete sequence of chromosome 1 of Burkholderia cenocepacia MC0-3.</title>
        <authorList>
            <person name="Copeland A."/>
            <person name="Lucas S."/>
            <person name="Lapidus A."/>
            <person name="Barry K."/>
            <person name="Bruce D."/>
            <person name="Goodwin L."/>
            <person name="Glavina del Rio T."/>
            <person name="Dalin E."/>
            <person name="Tice H."/>
            <person name="Pitluck S."/>
            <person name="Chain P."/>
            <person name="Malfatti S."/>
            <person name="Shin M."/>
            <person name="Vergez L."/>
            <person name="Schmutz J."/>
            <person name="Larimer F."/>
            <person name="Land M."/>
            <person name="Hauser L."/>
            <person name="Kyrpides N."/>
            <person name="Mikhailova N."/>
            <person name="Tiedje J."/>
            <person name="Richardson P."/>
        </authorList>
    </citation>
    <scope>NUCLEOTIDE SEQUENCE [LARGE SCALE GENOMIC DNA]</scope>
    <source>
        <strain>MC0-3</strain>
    </source>
</reference>
<proteinExistence type="inferred from homology"/>
<organism>
    <name type="scientific">Burkholderia orbicola (strain MC0-3)</name>
    <dbReference type="NCBI Taxonomy" id="406425"/>
    <lineage>
        <taxon>Bacteria</taxon>
        <taxon>Pseudomonadati</taxon>
        <taxon>Pseudomonadota</taxon>
        <taxon>Betaproteobacteria</taxon>
        <taxon>Burkholderiales</taxon>
        <taxon>Burkholderiaceae</taxon>
        <taxon>Burkholderia</taxon>
        <taxon>Burkholderia cepacia complex</taxon>
        <taxon>Burkholderia orbicola</taxon>
    </lineage>
</organism>
<comment type="function">
    <text evidence="1">Phosphorolytic 3'-5' exoribonuclease that plays an important role in tRNA 3'-end maturation. Removes nucleotide residues following the 3'-CCA terminus of tRNAs; can also add nucleotides to the ends of RNA molecules by using nucleoside diphosphates as substrates, but this may not be physiologically important. Probably plays a role in initiation of 16S rRNA degradation (leading to ribosome degradation) during starvation.</text>
</comment>
<comment type="catalytic activity">
    <reaction evidence="1">
        <text>tRNA(n+1) + phosphate = tRNA(n) + a ribonucleoside 5'-diphosphate</text>
        <dbReference type="Rhea" id="RHEA:10628"/>
        <dbReference type="Rhea" id="RHEA-COMP:17343"/>
        <dbReference type="Rhea" id="RHEA-COMP:17344"/>
        <dbReference type="ChEBI" id="CHEBI:43474"/>
        <dbReference type="ChEBI" id="CHEBI:57930"/>
        <dbReference type="ChEBI" id="CHEBI:173114"/>
        <dbReference type="EC" id="2.7.7.56"/>
    </reaction>
</comment>
<comment type="subunit">
    <text evidence="1">Homohexameric ring arranged as a trimer of dimers.</text>
</comment>
<comment type="similarity">
    <text evidence="1">Belongs to the RNase PH family.</text>
</comment>
<gene>
    <name evidence="1" type="primary">rph</name>
    <name type="ordered locus">Bcenmc03_0957</name>
</gene>
<accession>B1JXM2</accession>
<evidence type="ECO:0000255" key="1">
    <source>
        <dbReference type="HAMAP-Rule" id="MF_00564"/>
    </source>
</evidence>
<sequence>MTSSVSRPSGRRADELRKVALTRHYTKHAEGSVLVEFGDTKVLCTASVAERVPEFLRERGQGWLTAEYGMLPRATHTRSDREAARGKQTGRTQEIQRLIGRALRAVFDLEALGPRTIHIDCDVIQADGGTRTASITGAFVAAHDAVSTLIAAGKLARSPITDHVAAISVGVYEGAPVLDLDYAEDSRCDTDMNVVMTGAGGFVEVQGTAEGVPFSRAEMNALLDLAQGGIAELVQLQKDVLGASHA</sequence>
<feature type="chain" id="PRO_1000129326" description="Ribonuclease PH">
    <location>
        <begin position="1"/>
        <end position="246"/>
    </location>
</feature>
<feature type="binding site" evidence="1">
    <location>
        <position position="91"/>
    </location>
    <ligand>
        <name>phosphate</name>
        <dbReference type="ChEBI" id="CHEBI:43474"/>
        <note>substrate</note>
    </ligand>
</feature>
<feature type="binding site" evidence="1">
    <location>
        <begin position="129"/>
        <end position="131"/>
    </location>
    <ligand>
        <name>phosphate</name>
        <dbReference type="ChEBI" id="CHEBI:43474"/>
        <note>substrate</note>
    </ligand>
</feature>